<name>PUR5_FUSNN</name>
<gene>
    <name evidence="1" type="primary">purM</name>
    <name type="ordered locus">FN0986</name>
</gene>
<keyword id="KW-0067">ATP-binding</keyword>
<keyword id="KW-0963">Cytoplasm</keyword>
<keyword id="KW-0436">Ligase</keyword>
<keyword id="KW-0547">Nucleotide-binding</keyword>
<keyword id="KW-0658">Purine biosynthesis</keyword>
<keyword id="KW-1185">Reference proteome</keyword>
<reference key="1">
    <citation type="journal article" date="2002" name="J. Bacteriol.">
        <title>Genome sequence and analysis of the oral bacterium Fusobacterium nucleatum strain ATCC 25586.</title>
        <authorList>
            <person name="Kapatral V."/>
            <person name="Anderson I."/>
            <person name="Ivanova N."/>
            <person name="Reznik G."/>
            <person name="Los T."/>
            <person name="Lykidis A."/>
            <person name="Bhattacharyya A."/>
            <person name="Bartman A."/>
            <person name="Gardner W."/>
            <person name="Grechkin G."/>
            <person name="Zhu L."/>
            <person name="Vasieva O."/>
            <person name="Chu L."/>
            <person name="Kogan Y."/>
            <person name="Chaga O."/>
            <person name="Goltsman E."/>
            <person name="Bernal A."/>
            <person name="Larsen N."/>
            <person name="D'Souza M."/>
            <person name="Walunas T."/>
            <person name="Pusch G."/>
            <person name="Haselkorn R."/>
            <person name="Fonstein M."/>
            <person name="Kyrpides N.C."/>
            <person name="Overbeek R."/>
        </authorList>
    </citation>
    <scope>NUCLEOTIDE SEQUENCE [LARGE SCALE GENOMIC DNA]</scope>
    <source>
        <strain>ATCC 25586 / DSM 15643 / BCRC 10681 / CIP 101130 / JCM 8532 / KCTC 2640 / LMG 13131 / VPI 4355</strain>
    </source>
</reference>
<proteinExistence type="inferred from homology"/>
<feature type="chain" id="PRO_0000148213" description="Phosphoribosylformylglycinamidine cyclo-ligase">
    <location>
        <begin position="1"/>
        <end position="339"/>
    </location>
</feature>
<dbReference type="EC" id="6.3.3.1" evidence="1"/>
<dbReference type="EMBL" id="AE009951">
    <property type="protein sequence ID" value="AAL95182.1"/>
    <property type="molecule type" value="Genomic_DNA"/>
</dbReference>
<dbReference type="RefSeq" id="NP_603883.1">
    <property type="nucleotide sequence ID" value="NC_003454.1"/>
</dbReference>
<dbReference type="RefSeq" id="WP_011016807.1">
    <property type="nucleotide sequence ID" value="NZ_CP028101.1"/>
</dbReference>
<dbReference type="SMR" id="Q8REV3"/>
<dbReference type="FunCoup" id="Q8REV3">
    <property type="interactions" value="339"/>
</dbReference>
<dbReference type="STRING" id="190304.FN0986"/>
<dbReference type="PaxDb" id="190304-FN0986"/>
<dbReference type="EnsemblBacteria" id="AAL95182">
    <property type="protein sequence ID" value="AAL95182"/>
    <property type="gene ID" value="FN0986"/>
</dbReference>
<dbReference type="GeneID" id="79783969"/>
<dbReference type="KEGG" id="fnu:FN0986"/>
<dbReference type="PATRIC" id="fig|190304.8.peg.1551"/>
<dbReference type="eggNOG" id="COG0150">
    <property type="taxonomic scope" value="Bacteria"/>
</dbReference>
<dbReference type="HOGENOM" id="CLU_047116_0_0_0"/>
<dbReference type="InParanoid" id="Q8REV3"/>
<dbReference type="BioCyc" id="FNUC190304:G1FZS-1568-MONOMER"/>
<dbReference type="UniPathway" id="UPA00074">
    <property type="reaction ID" value="UER00129"/>
</dbReference>
<dbReference type="Proteomes" id="UP000002521">
    <property type="component" value="Chromosome"/>
</dbReference>
<dbReference type="GO" id="GO:0005829">
    <property type="term" value="C:cytosol"/>
    <property type="evidence" value="ECO:0000318"/>
    <property type="project" value="GO_Central"/>
</dbReference>
<dbReference type="GO" id="GO:0005524">
    <property type="term" value="F:ATP binding"/>
    <property type="evidence" value="ECO:0007669"/>
    <property type="project" value="UniProtKB-KW"/>
</dbReference>
<dbReference type="GO" id="GO:0004637">
    <property type="term" value="F:phosphoribosylamine-glycine ligase activity"/>
    <property type="evidence" value="ECO:0000318"/>
    <property type="project" value="GO_Central"/>
</dbReference>
<dbReference type="GO" id="GO:0004641">
    <property type="term" value="F:phosphoribosylformylglycinamidine cyclo-ligase activity"/>
    <property type="evidence" value="ECO:0000318"/>
    <property type="project" value="GO_Central"/>
</dbReference>
<dbReference type="GO" id="GO:0006189">
    <property type="term" value="P:'de novo' IMP biosynthetic process"/>
    <property type="evidence" value="ECO:0007669"/>
    <property type="project" value="UniProtKB-UniRule"/>
</dbReference>
<dbReference type="GO" id="GO:0046084">
    <property type="term" value="P:adenine biosynthetic process"/>
    <property type="evidence" value="ECO:0000318"/>
    <property type="project" value="GO_Central"/>
</dbReference>
<dbReference type="GO" id="GO:0006164">
    <property type="term" value="P:purine nucleotide biosynthetic process"/>
    <property type="evidence" value="ECO:0000318"/>
    <property type="project" value="GO_Central"/>
</dbReference>
<dbReference type="CDD" id="cd02196">
    <property type="entry name" value="PurM"/>
    <property type="match status" value="1"/>
</dbReference>
<dbReference type="FunFam" id="3.30.1330.10:FF:000001">
    <property type="entry name" value="Phosphoribosylformylglycinamidine cyclo-ligase"/>
    <property type="match status" value="1"/>
</dbReference>
<dbReference type="FunFam" id="3.90.650.10:FF:000011">
    <property type="entry name" value="Phosphoribosylformylglycinamidine cyclo-ligase"/>
    <property type="match status" value="1"/>
</dbReference>
<dbReference type="Gene3D" id="3.90.650.10">
    <property type="entry name" value="PurM-like C-terminal domain"/>
    <property type="match status" value="1"/>
</dbReference>
<dbReference type="Gene3D" id="3.30.1330.10">
    <property type="entry name" value="PurM-like, N-terminal domain"/>
    <property type="match status" value="1"/>
</dbReference>
<dbReference type="HAMAP" id="MF_00741">
    <property type="entry name" value="AIRS"/>
    <property type="match status" value="1"/>
</dbReference>
<dbReference type="InterPro" id="IPR010918">
    <property type="entry name" value="PurM-like_C_dom"/>
</dbReference>
<dbReference type="InterPro" id="IPR036676">
    <property type="entry name" value="PurM-like_C_sf"/>
</dbReference>
<dbReference type="InterPro" id="IPR016188">
    <property type="entry name" value="PurM-like_N"/>
</dbReference>
<dbReference type="InterPro" id="IPR036921">
    <property type="entry name" value="PurM-like_N_sf"/>
</dbReference>
<dbReference type="InterPro" id="IPR004733">
    <property type="entry name" value="PurM_cligase"/>
</dbReference>
<dbReference type="NCBIfam" id="TIGR00878">
    <property type="entry name" value="purM"/>
    <property type="match status" value="1"/>
</dbReference>
<dbReference type="PANTHER" id="PTHR10520:SF12">
    <property type="entry name" value="TRIFUNCTIONAL PURINE BIOSYNTHETIC PROTEIN ADENOSINE-3"/>
    <property type="match status" value="1"/>
</dbReference>
<dbReference type="PANTHER" id="PTHR10520">
    <property type="entry name" value="TRIFUNCTIONAL PURINE BIOSYNTHETIC PROTEIN ADENOSINE-3-RELATED"/>
    <property type="match status" value="1"/>
</dbReference>
<dbReference type="Pfam" id="PF00586">
    <property type="entry name" value="AIRS"/>
    <property type="match status" value="1"/>
</dbReference>
<dbReference type="Pfam" id="PF02769">
    <property type="entry name" value="AIRS_C"/>
    <property type="match status" value="1"/>
</dbReference>
<dbReference type="SUPFAM" id="SSF56042">
    <property type="entry name" value="PurM C-terminal domain-like"/>
    <property type="match status" value="1"/>
</dbReference>
<dbReference type="SUPFAM" id="SSF55326">
    <property type="entry name" value="PurM N-terminal domain-like"/>
    <property type="match status" value="1"/>
</dbReference>
<accession>Q8REV3</accession>
<comment type="catalytic activity">
    <reaction evidence="1">
        <text>2-formamido-N(1)-(5-O-phospho-beta-D-ribosyl)acetamidine + ATP = 5-amino-1-(5-phospho-beta-D-ribosyl)imidazole + ADP + phosphate + H(+)</text>
        <dbReference type="Rhea" id="RHEA:23032"/>
        <dbReference type="ChEBI" id="CHEBI:15378"/>
        <dbReference type="ChEBI" id="CHEBI:30616"/>
        <dbReference type="ChEBI" id="CHEBI:43474"/>
        <dbReference type="ChEBI" id="CHEBI:137981"/>
        <dbReference type="ChEBI" id="CHEBI:147287"/>
        <dbReference type="ChEBI" id="CHEBI:456216"/>
        <dbReference type="EC" id="6.3.3.1"/>
    </reaction>
</comment>
<comment type="pathway">
    <text evidence="1">Purine metabolism; IMP biosynthesis via de novo pathway; 5-amino-1-(5-phospho-D-ribosyl)imidazole from N(2)-formyl-N(1)-(5-phospho-D-ribosyl)glycinamide: step 2/2.</text>
</comment>
<comment type="subcellular location">
    <subcellularLocation>
        <location evidence="1">Cytoplasm</location>
    </subcellularLocation>
</comment>
<comment type="similarity">
    <text evidence="1">Belongs to the AIR synthase family.</text>
</comment>
<organism>
    <name type="scientific">Fusobacterium nucleatum subsp. nucleatum (strain ATCC 25586 / DSM 15643 / BCRC 10681 / CIP 101130 / JCM 8532 / KCTC 2640 / LMG 13131 / VPI 4355)</name>
    <dbReference type="NCBI Taxonomy" id="190304"/>
    <lineage>
        <taxon>Bacteria</taxon>
        <taxon>Fusobacteriati</taxon>
        <taxon>Fusobacteriota</taxon>
        <taxon>Fusobacteriia</taxon>
        <taxon>Fusobacteriales</taxon>
        <taxon>Fusobacteriaceae</taxon>
        <taxon>Fusobacterium</taxon>
    </lineage>
</organism>
<evidence type="ECO:0000255" key="1">
    <source>
        <dbReference type="HAMAP-Rule" id="MF_00741"/>
    </source>
</evidence>
<sequence>MINSYKDSGVDKEEGYKAVELMKKNVLKTHNKSVLTNLGSFGAMYELGQYKNPVLISGTDGVGTKLEIAMKQKKYDTVGIDCVAMCVNDVLCHGAKPLFFLDYLACGKLDAEVAAQLVSGVTEGCLQSYAALVGGETAEMPGFYKEGDYDIAGFCVGIVEKEDLIDGSKVKEGNKIIAVASSGFHSNGYSLVRKVFTDYNEKIFLKEYGENVTMGDVLLTPTKIYVKPILKVLEKFNVNGMAHITGGGLFENLPRCMGKNLSPVVFKDKVRVPEIFKLIAERSKIKEEELFGTFNMGVGFTLVVEEKDVETIIELLTSLGETAYEIGHIEKGDHSLCLK</sequence>
<protein>
    <recommendedName>
        <fullName evidence="1">Phosphoribosylformylglycinamidine cyclo-ligase</fullName>
        <ecNumber evidence="1">6.3.3.1</ecNumber>
    </recommendedName>
    <alternativeName>
        <fullName evidence="1">AIR synthase</fullName>
    </alternativeName>
    <alternativeName>
        <fullName evidence="1">AIRS</fullName>
    </alternativeName>
    <alternativeName>
        <fullName evidence="1">Phosphoribosyl-aminoimidazole synthetase</fullName>
    </alternativeName>
</protein>